<dbReference type="EC" id="7.6.2.-" evidence="1"/>
<dbReference type="EMBL" id="AE016825">
    <property type="protein sequence ID" value="AAQ60374.1"/>
    <property type="molecule type" value="Genomic_DNA"/>
</dbReference>
<dbReference type="RefSeq" id="WP_011136251.1">
    <property type="nucleotide sequence ID" value="NC_005085.1"/>
</dbReference>
<dbReference type="SMR" id="Q7NUJ3"/>
<dbReference type="STRING" id="243365.CV_2704"/>
<dbReference type="KEGG" id="cvi:CV_2704"/>
<dbReference type="eggNOG" id="COG0577">
    <property type="taxonomic scope" value="Bacteria"/>
</dbReference>
<dbReference type="eggNOG" id="COG1136">
    <property type="taxonomic scope" value="Bacteria"/>
</dbReference>
<dbReference type="HOGENOM" id="CLU_000604_78_1_4"/>
<dbReference type="OrthoDB" id="4814201at2"/>
<dbReference type="Proteomes" id="UP000001424">
    <property type="component" value="Chromosome"/>
</dbReference>
<dbReference type="GO" id="GO:0005886">
    <property type="term" value="C:plasma membrane"/>
    <property type="evidence" value="ECO:0007669"/>
    <property type="project" value="UniProtKB-SubCell"/>
</dbReference>
<dbReference type="GO" id="GO:0005524">
    <property type="term" value="F:ATP binding"/>
    <property type="evidence" value="ECO:0007669"/>
    <property type="project" value="UniProtKB-KW"/>
</dbReference>
<dbReference type="GO" id="GO:0016887">
    <property type="term" value="F:ATP hydrolysis activity"/>
    <property type="evidence" value="ECO:0007669"/>
    <property type="project" value="InterPro"/>
</dbReference>
<dbReference type="GO" id="GO:0022857">
    <property type="term" value="F:transmembrane transporter activity"/>
    <property type="evidence" value="ECO:0007669"/>
    <property type="project" value="TreeGrafter"/>
</dbReference>
<dbReference type="GO" id="GO:0046677">
    <property type="term" value="P:response to antibiotic"/>
    <property type="evidence" value="ECO:0007669"/>
    <property type="project" value="UniProtKB-KW"/>
</dbReference>
<dbReference type="CDD" id="cd03255">
    <property type="entry name" value="ABC_MJ0796_LolCDE_FtsE"/>
    <property type="match status" value="1"/>
</dbReference>
<dbReference type="FunFam" id="3.40.50.300:FF:000032">
    <property type="entry name" value="Export ABC transporter ATP-binding protein"/>
    <property type="match status" value="1"/>
</dbReference>
<dbReference type="Gene3D" id="3.40.50.300">
    <property type="entry name" value="P-loop containing nucleotide triphosphate hydrolases"/>
    <property type="match status" value="1"/>
</dbReference>
<dbReference type="InterPro" id="IPR003593">
    <property type="entry name" value="AAA+_ATPase"/>
</dbReference>
<dbReference type="InterPro" id="IPR003838">
    <property type="entry name" value="ABC3_permease_C"/>
</dbReference>
<dbReference type="InterPro" id="IPR003439">
    <property type="entry name" value="ABC_transporter-like_ATP-bd"/>
</dbReference>
<dbReference type="InterPro" id="IPR017871">
    <property type="entry name" value="ABC_transporter-like_CS"/>
</dbReference>
<dbReference type="InterPro" id="IPR017911">
    <property type="entry name" value="MacB-like_ATP-bd"/>
</dbReference>
<dbReference type="InterPro" id="IPR025857">
    <property type="entry name" value="MacB_PCD"/>
</dbReference>
<dbReference type="InterPro" id="IPR050250">
    <property type="entry name" value="Macrolide_Exporter_MacB"/>
</dbReference>
<dbReference type="InterPro" id="IPR027417">
    <property type="entry name" value="P-loop_NTPase"/>
</dbReference>
<dbReference type="PANTHER" id="PTHR30572:SF7">
    <property type="entry name" value="MACROLIDE EXPORT ATP-BINDING_PERMEASE PROTEIN MACB"/>
    <property type="match status" value="1"/>
</dbReference>
<dbReference type="PANTHER" id="PTHR30572">
    <property type="entry name" value="MEMBRANE COMPONENT OF TRANSPORTER-RELATED"/>
    <property type="match status" value="1"/>
</dbReference>
<dbReference type="Pfam" id="PF00005">
    <property type="entry name" value="ABC_tran"/>
    <property type="match status" value="1"/>
</dbReference>
<dbReference type="Pfam" id="PF02687">
    <property type="entry name" value="FtsX"/>
    <property type="match status" value="1"/>
</dbReference>
<dbReference type="Pfam" id="PF12704">
    <property type="entry name" value="MacB_PCD"/>
    <property type="match status" value="1"/>
</dbReference>
<dbReference type="SMART" id="SM00382">
    <property type="entry name" value="AAA"/>
    <property type="match status" value="1"/>
</dbReference>
<dbReference type="SUPFAM" id="SSF52540">
    <property type="entry name" value="P-loop containing nucleoside triphosphate hydrolases"/>
    <property type="match status" value="1"/>
</dbReference>
<dbReference type="PROSITE" id="PS00211">
    <property type="entry name" value="ABC_TRANSPORTER_1"/>
    <property type="match status" value="1"/>
</dbReference>
<dbReference type="PROSITE" id="PS50893">
    <property type="entry name" value="ABC_TRANSPORTER_2"/>
    <property type="match status" value="1"/>
</dbReference>
<dbReference type="PROSITE" id="PS51267">
    <property type="entry name" value="MACB"/>
    <property type="match status" value="1"/>
</dbReference>
<proteinExistence type="inferred from homology"/>
<comment type="function">
    <text evidence="1">Non-canonical ABC transporter that contains transmembrane domains (TMD), which form a pore in the inner membrane, and an ATP-binding domain (NBD), which is responsible for energy generation. Confers resistance against macrolides.</text>
</comment>
<comment type="subunit">
    <text evidence="1">Homodimer.</text>
</comment>
<comment type="subcellular location">
    <subcellularLocation>
        <location evidence="1">Cell inner membrane</location>
        <topology evidence="1">Multi-pass membrane protein</topology>
    </subcellularLocation>
</comment>
<comment type="similarity">
    <text evidence="1">Belongs to the ABC transporter superfamily. Macrolide exporter (TC 3.A.1.122) family.</text>
</comment>
<evidence type="ECO:0000255" key="1">
    <source>
        <dbReference type="HAMAP-Rule" id="MF_01720"/>
    </source>
</evidence>
<sequence>MSGAGLELDGVWRRFPSGEDEVAVLKNVTLSIAPGEMVAIVGASGSGKSTLMNILGCLDQPSVGRYRVAGQDAGCLDGDQLAALRRGHFGFIFQRYHLLPHLSALDNVAMPAVYAGMALHQRRERARALLARLGLAGKEHHRPGQLSGGQQQRVSIARALMNGGRIILADEPTGALDSHSGEEVMRILKELNAAGHTVIIVTHDPAIAAQTERVIEIRDGEILRDSGAPAREAASQATEAQPDGGPLLRERLAEAFKMAMLAMSANRLRTALTMLGIVIGIASVVSVIAIGEGSRDYVLKGIREMGTQTITVFRGKDWGDDKADGVRTFLPGDVAALEGEGYVDSVTPETAQAQRIRYRNVDVNASVIGVGRDFFRVQGMKLAEGQSFSRDDIHFQRQVVVLDKNSRRKLFGDGEAVGRVILVGMVPATVIGVVAQRDRGFGGNSLQMWMPYSTAASRLFGQQHFDRFVIRVKDGQPTKLAEKAIGALLTQRHGGKDFFTYNMDEILKTVESSSRALSLLLALVAVISLVVGGIGVMNIMLVSVTERTREIGIRMAVGARQGDVLQQFLTEAVLVCLVGGAIGVALSYGVSFVFSLFVTEWKMSLSPPVIALAVACSSLIGVLFGFLPARNAAKLNPIDALARE</sequence>
<accession>Q7NUJ3</accession>
<protein>
    <recommendedName>
        <fullName evidence="1">Macrolide export ATP-binding/permease protein MacB</fullName>
        <ecNumber evidence="1">7.6.2.-</ecNumber>
    </recommendedName>
</protein>
<reference key="1">
    <citation type="journal article" date="2003" name="Proc. Natl. Acad. Sci. U.S.A.">
        <title>The complete genome sequence of Chromobacterium violaceum reveals remarkable and exploitable bacterial adaptability.</title>
        <authorList>
            <person name="Vasconcelos A.T.R."/>
            <person name="de Almeida D.F."/>
            <person name="Hungria M."/>
            <person name="Guimaraes C.T."/>
            <person name="Antonio R.V."/>
            <person name="Almeida F.C."/>
            <person name="de Almeida L.G.P."/>
            <person name="de Almeida R."/>
            <person name="Alves-Gomes J.A."/>
            <person name="Andrade E.M."/>
            <person name="Araripe J."/>
            <person name="de Araujo M.F.F."/>
            <person name="Astolfi-Filho S."/>
            <person name="Azevedo V."/>
            <person name="Baptista A.J."/>
            <person name="Bataus L.A.M."/>
            <person name="Batista J.S."/>
            <person name="Belo A."/>
            <person name="van den Berg C."/>
            <person name="Bogo M."/>
            <person name="Bonatto S."/>
            <person name="Bordignon J."/>
            <person name="Brigido M.M."/>
            <person name="Brito C.A."/>
            <person name="Brocchi M."/>
            <person name="Burity H.A."/>
            <person name="Camargo A.A."/>
            <person name="Cardoso D.D.P."/>
            <person name="Carneiro N.P."/>
            <person name="Carraro D.M."/>
            <person name="Carvalho C.M.B."/>
            <person name="Cascardo J.C.M."/>
            <person name="Cavada B.S."/>
            <person name="Chueire L.M.O."/>
            <person name="Creczynski-Pasa T.B."/>
            <person name="Cunha-Junior N.C."/>
            <person name="Fagundes N."/>
            <person name="Falcao C.L."/>
            <person name="Fantinatti F."/>
            <person name="Farias I.P."/>
            <person name="Felipe M.S.S."/>
            <person name="Ferrari L.P."/>
            <person name="Ferro J.A."/>
            <person name="Ferro M.I.T."/>
            <person name="Franco G.R."/>
            <person name="Freitas N.S.A."/>
            <person name="Furlan L.R."/>
            <person name="Gazzinelli R.T."/>
            <person name="Gomes E.A."/>
            <person name="Goncalves P.R."/>
            <person name="Grangeiro T.B."/>
            <person name="Grattapaglia D."/>
            <person name="Grisard E.C."/>
            <person name="Hanna E.S."/>
            <person name="Jardim S.N."/>
            <person name="Laurino J."/>
            <person name="Leoi L.C.T."/>
            <person name="Lima L.F.A."/>
            <person name="Loureiro M.F."/>
            <person name="Lyra M.C.C.P."/>
            <person name="Madeira H.M.F."/>
            <person name="Manfio G.P."/>
            <person name="Maranhao A.Q."/>
            <person name="Martins W.S."/>
            <person name="di Mauro S.M.Z."/>
            <person name="de Medeiros S.R.B."/>
            <person name="Meissner R.V."/>
            <person name="Moreira M.A.M."/>
            <person name="Nascimento F.F."/>
            <person name="Nicolas M.F."/>
            <person name="Oliveira J.G."/>
            <person name="Oliveira S.C."/>
            <person name="Paixao R.F.C."/>
            <person name="Parente J.A."/>
            <person name="Pedrosa F.O."/>
            <person name="Pena S.D.J."/>
            <person name="Pereira J.O."/>
            <person name="Pereira M."/>
            <person name="Pinto L.S.R.C."/>
            <person name="Pinto L.S."/>
            <person name="Porto J.I.R."/>
            <person name="Potrich D.P."/>
            <person name="Ramalho-Neto C.E."/>
            <person name="Reis A.M.M."/>
            <person name="Rigo L.U."/>
            <person name="Rondinelli E."/>
            <person name="Santos E.B.P."/>
            <person name="Santos F.R."/>
            <person name="Schneider M.P.C."/>
            <person name="Seuanez H.N."/>
            <person name="Silva A.M.R."/>
            <person name="da Silva A.L.C."/>
            <person name="Silva D.W."/>
            <person name="Silva R."/>
            <person name="Simoes I.C."/>
            <person name="Simon D."/>
            <person name="Soares C.M.A."/>
            <person name="Soares R.B.A."/>
            <person name="Souza E.M."/>
            <person name="Souza K.R.L."/>
            <person name="Souza R.C."/>
            <person name="Steffens M.B.R."/>
            <person name="Steindel M."/>
            <person name="Teixeira S.R."/>
            <person name="Urmenyi T."/>
            <person name="Vettore A."/>
            <person name="Wassem R."/>
            <person name="Zaha A."/>
            <person name="Simpson A.J.G."/>
        </authorList>
    </citation>
    <scope>NUCLEOTIDE SEQUENCE [LARGE SCALE GENOMIC DNA]</scope>
    <source>
        <strain>ATCC 12472 / DSM 30191 / JCM 1249 / CCUG 213 / NBRC 12614 / NCIMB 9131 / NCTC 9757 / MK</strain>
    </source>
</reference>
<feature type="chain" id="PRO_0000269937" description="Macrolide export ATP-binding/permease protein MacB">
    <location>
        <begin position="1"/>
        <end position="644"/>
    </location>
</feature>
<feature type="transmembrane region" description="Helical" evidence="1">
    <location>
        <begin position="271"/>
        <end position="291"/>
    </location>
</feature>
<feature type="transmembrane region" description="Helical" evidence="1">
    <location>
        <begin position="415"/>
        <end position="435"/>
    </location>
</feature>
<feature type="transmembrane region" description="Helical" evidence="1">
    <location>
        <begin position="517"/>
        <end position="537"/>
    </location>
</feature>
<feature type="transmembrane region" description="Helical" evidence="1">
    <location>
        <begin position="574"/>
        <end position="594"/>
    </location>
</feature>
<feature type="transmembrane region" description="Helical" evidence="1">
    <location>
        <begin position="609"/>
        <end position="629"/>
    </location>
</feature>
<feature type="domain" description="ABC transporter" evidence="1">
    <location>
        <begin position="6"/>
        <end position="244"/>
    </location>
</feature>
<feature type="binding site" evidence="1">
    <location>
        <begin position="42"/>
        <end position="49"/>
    </location>
    <ligand>
        <name>ATP</name>
        <dbReference type="ChEBI" id="CHEBI:30616"/>
    </ligand>
</feature>
<gene>
    <name evidence="1" type="primary">macB</name>
    <name type="ordered locus">CV_2704</name>
</gene>
<organism>
    <name type="scientific">Chromobacterium violaceum (strain ATCC 12472 / DSM 30191 / JCM 1249 / CCUG 213 / NBRC 12614 / NCIMB 9131 / NCTC 9757 / MK)</name>
    <dbReference type="NCBI Taxonomy" id="243365"/>
    <lineage>
        <taxon>Bacteria</taxon>
        <taxon>Pseudomonadati</taxon>
        <taxon>Pseudomonadota</taxon>
        <taxon>Betaproteobacteria</taxon>
        <taxon>Neisseriales</taxon>
        <taxon>Chromobacteriaceae</taxon>
        <taxon>Chromobacterium</taxon>
    </lineage>
</organism>
<name>MACB_CHRVO</name>
<keyword id="KW-0046">Antibiotic resistance</keyword>
<keyword id="KW-0067">ATP-binding</keyword>
<keyword id="KW-0997">Cell inner membrane</keyword>
<keyword id="KW-1003">Cell membrane</keyword>
<keyword id="KW-0472">Membrane</keyword>
<keyword id="KW-0547">Nucleotide-binding</keyword>
<keyword id="KW-1185">Reference proteome</keyword>
<keyword id="KW-1278">Translocase</keyword>
<keyword id="KW-0812">Transmembrane</keyword>
<keyword id="KW-1133">Transmembrane helix</keyword>
<keyword id="KW-0813">Transport</keyword>